<dbReference type="EMBL" id="AE017126">
    <property type="protein sequence ID" value="AAP99350.1"/>
    <property type="molecule type" value="Genomic_DNA"/>
</dbReference>
<dbReference type="RefSeq" id="NP_874698.1">
    <property type="nucleotide sequence ID" value="NC_005042.1"/>
</dbReference>
<dbReference type="RefSeq" id="WP_011124459.1">
    <property type="nucleotide sequence ID" value="NC_005042.1"/>
</dbReference>
<dbReference type="SMR" id="Q7VDR4"/>
<dbReference type="STRING" id="167539.Pro_0304"/>
<dbReference type="EnsemblBacteria" id="AAP99350">
    <property type="protein sequence ID" value="AAP99350"/>
    <property type="gene ID" value="Pro_0304"/>
</dbReference>
<dbReference type="KEGG" id="pma:Pro_0304"/>
<dbReference type="PATRIC" id="fig|167539.5.peg.313"/>
<dbReference type="HOGENOM" id="CLU_174355_0_0_3"/>
<dbReference type="Proteomes" id="UP000001420">
    <property type="component" value="Chromosome"/>
</dbReference>
<dbReference type="GO" id="GO:0009539">
    <property type="term" value="C:photosystem II reaction center"/>
    <property type="evidence" value="ECO:0007669"/>
    <property type="project" value="InterPro"/>
</dbReference>
<dbReference type="GO" id="GO:0031676">
    <property type="term" value="C:plasma membrane-derived thylakoid membrane"/>
    <property type="evidence" value="ECO:0007669"/>
    <property type="project" value="UniProtKB-SubCell"/>
</dbReference>
<dbReference type="GO" id="GO:0015979">
    <property type="term" value="P:photosynthesis"/>
    <property type="evidence" value="ECO:0007669"/>
    <property type="project" value="UniProtKB-UniRule"/>
</dbReference>
<dbReference type="HAMAP" id="MF_00441">
    <property type="entry name" value="PSII_PsbK"/>
    <property type="match status" value="1"/>
</dbReference>
<dbReference type="InterPro" id="IPR003687">
    <property type="entry name" value="PSII_PsbK"/>
</dbReference>
<dbReference type="InterPro" id="IPR037270">
    <property type="entry name" value="PSII_PsbK_sf"/>
</dbReference>
<dbReference type="NCBIfam" id="NF002715">
    <property type="entry name" value="PRK02553.1"/>
    <property type="match status" value="1"/>
</dbReference>
<dbReference type="PANTHER" id="PTHR35325">
    <property type="match status" value="1"/>
</dbReference>
<dbReference type="PANTHER" id="PTHR35325:SF1">
    <property type="entry name" value="PHOTOSYSTEM II REACTION CENTER PROTEIN K"/>
    <property type="match status" value="1"/>
</dbReference>
<dbReference type="Pfam" id="PF02533">
    <property type="entry name" value="PsbK"/>
    <property type="match status" value="1"/>
</dbReference>
<dbReference type="SUPFAM" id="SSF161037">
    <property type="entry name" value="Photosystem II reaction center protein K, PsbK"/>
    <property type="match status" value="1"/>
</dbReference>
<comment type="function">
    <text evidence="1">One of the components of the core complex of photosystem II (PSII). PSII is a light-driven water:plastoquinone oxidoreductase that uses light energy to abstract electrons from H(2)O, generating O(2) and a proton gradient subsequently used for ATP formation. It consists of a core antenna complex that captures photons, and an electron transfer chain that converts photonic excitation into a charge separation.</text>
</comment>
<comment type="subunit">
    <text evidence="2">PSII is composed of 1 copy each of membrane proteins PsbA, PsbB, PsbC, PsbD, PsbE, PsbF, PsbH, PsbI, PsbJ, PsbK, PsbL, PsbM, PsbT, PsbX, PsbY, Psb30/Ycf12, peripheral proteins PsbO, CyanoQ (PsbQ), PsbU, PsbV and a large number of cofactors. It forms dimeric complexes.</text>
</comment>
<comment type="subcellular location">
    <subcellularLocation>
        <location evidence="1">Cellular thylakoid membrane</location>
        <topology evidence="1">Single-pass membrane protein</topology>
    </subcellularLocation>
</comment>
<comment type="similarity">
    <text evidence="1">Belongs to the PsbK family.</text>
</comment>
<gene>
    <name evidence="1" type="primary">psbK</name>
    <name type="ordered locus">Pro_0304</name>
</gene>
<proteinExistence type="inferred from homology"/>
<feature type="propeptide" id="PRO_0000029537" evidence="1">
    <location>
        <begin position="1"/>
        <end position="10"/>
    </location>
</feature>
<feature type="chain" id="PRO_0000029538" description="Photosystem II reaction center protein K" evidence="1">
    <location>
        <begin position="11"/>
        <end position="47"/>
    </location>
</feature>
<feature type="transmembrane region" description="Helical" evidence="1">
    <location>
        <begin position="26"/>
        <end position="46"/>
    </location>
</feature>
<evidence type="ECO:0000255" key="1">
    <source>
        <dbReference type="HAMAP-Rule" id="MF_00441"/>
    </source>
</evidence>
<evidence type="ECO:0000305" key="2"/>
<keyword id="KW-0472">Membrane</keyword>
<keyword id="KW-0602">Photosynthesis</keyword>
<keyword id="KW-0604">Photosystem II</keyword>
<keyword id="KW-0674">Reaction center</keyword>
<keyword id="KW-1185">Reference proteome</keyword>
<keyword id="KW-0793">Thylakoid</keyword>
<keyword id="KW-0812">Transmembrane</keyword>
<keyword id="KW-1133">Transmembrane helix</keyword>
<organism>
    <name type="scientific">Prochlorococcus marinus (strain SARG / CCMP1375 / SS120)</name>
    <dbReference type="NCBI Taxonomy" id="167539"/>
    <lineage>
        <taxon>Bacteria</taxon>
        <taxon>Bacillati</taxon>
        <taxon>Cyanobacteriota</taxon>
        <taxon>Cyanophyceae</taxon>
        <taxon>Synechococcales</taxon>
        <taxon>Prochlorococcaceae</taxon>
        <taxon>Prochlorococcus</taxon>
    </lineage>
</organism>
<protein>
    <recommendedName>
        <fullName evidence="1">Photosystem II reaction center protein K</fullName>
        <shortName evidence="1">PSII-K</shortName>
    </recommendedName>
</protein>
<reference key="1">
    <citation type="journal article" date="2003" name="Proc. Natl. Acad. Sci. U.S.A.">
        <title>Genome sequence of the cyanobacterium Prochlorococcus marinus SS120, a nearly minimal oxyphototrophic genome.</title>
        <authorList>
            <person name="Dufresne A."/>
            <person name="Salanoubat M."/>
            <person name="Partensky F."/>
            <person name="Artiguenave F."/>
            <person name="Axmann I.M."/>
            <person name="Barbe V."/>
            <person name="Duprat S."/>
            <person name="Galperin M.Y."/>
            <person name="Koonin E.V."/>
            <person name="Le Gall F."/>
            <person name="Makarova K.S."/>
            <person name="Ostrowski M."/>
            <person name="Oztas S."/>
            <person name="Robert C."/>
            <person name="Rogozin I.B."/>
            <person name="Scanlan D.J."/>
            <person name="Tandeau de Marsac N."/>
            <person name="Weissenbach J."/>
            <person name="Wincker P."/>
            <person name="Wolf Y.I."/>
            <person name="Hess W.R."/>
        </authorList>
    </citation>
    <scope>NUCLEOTIDE SEQUENCE [LARGE SCALE GENOMIC DNA]</scope>
    <source>
        <strain>SARG / CCMP1375 / SS120</strain>
    </source>
</reference>
<accession>Q7VDR4</accession>
<sequence>MAPLTLDLLAQLPEAYQLYAPTVDVLPLIPLLFFLLVFVWQAAVGFR</sequence>
<name>PSBK_PROMA</name>